<name>IF2_SHEPA</name>
<dbReference type="EMBL" id="CP000851">
    <property type="protein sequence ID" value="ABV88377.1"/>
    <property type="molecule type" value="Genomic_DNA"/>
</dbReference>
<dbReference type="RefSeq" id="WP_012156281.1">
    <property type="nucleotide sequence ID" value="NC_009901.1"/>
</dbReference>
<dbReference type="SMR" id="A8H740"/>
<dbReference type="STRING" id="398579.Spea_3060"/>
<dbReference type="KEGG" id="spl:Spea_3060"/>
<dbReference type="eggNOG" id="COG0532">
    <property type="taxonomic scope" value="Bacteria"/>
</dbReference>
<dbReference type="HOGENOM" id="CLU_006301_6_3_6"/>
<dbReference type="OrthoDB" id="9811804at2"/>
<dbReference type="Proteomes" id="UP000002608">
    <property type="component" value="Chromosome"/>
</dbReference>
<dbReference type="GO" id="GO:0005829">
    <property type="term" value="C:cytosol"/>
    <property type="evidence" value="ECO:0007669"/>
    <property type="project" value="TreeGrafter"/>
</dbReference>
<dbReference type="GO" id="GO:0005525">
    <property type="term" value="F:GTP binding"/>
    <property type="evidence" value="ECO:0007669"/>
    <property type="project" value="UniProtKB-KW"/>
</dbReference>
<dbReference type="GO" id="GO:0003924">
    <property type="term" value="F:GTPase activity"/>
    <property type="evidence" value="ECO:0007669"/>
    <property type="project" value="UniProtKB-UniRule"/>
</dbReference>
<dbReference type="GO" id="GO:0097216">
    <property type="term" value="F:guanosine tetraphosphate binding"/>
    <property type="evidence" value="ECO:0007669"/>
    <property type="project" value="UniProtKB-ARBA"/>
</dbReference>
<dbReference type="GO" id="GO:0003743">
    <property type="term" value="F:translation initiation factor activity"/>
    <property type="evidence" value="ECO:0007669"/>
    <property type="project" value="UniProtKB-UniRule"/>
</dbReference>
<dbReference type="CDD" id="cd01887">
    <property type="entry name" value="IF2_eIF5B"/>
    <property type="match status" value="1"/>
</dbReference>
<dbReference type="CDD" id="cd03702">
    <property type="entry name" value="IF2_mtIF2_II"/>
    <property type="match status" value="1"/>
</dbReference>
<dbReference type="CDD" id="cd03692">
    <property type="entry name" value="mtIF2_IVc"/>
    <property type="match status" value="1"/>
</dbReference>
<dbReference type="FunFam" id="2.40.30.10:FF:000007">
    <property type="entry name" value="Translation initiation factor IF-2"/>
    <property type="match status" value="1"/>
</dbReference>
<dbReference type="FunFam" id="2.40.30.10:FF:000008">
    <property type="entry name" value="Translation initiation factor IF-2"/>
    <property type="match status" value="1"/>
</dbReference>
<dbReference type="FunFam" id="3.40.50.10050:FF:000001">
    <property type="entry name" value="Translation initiation factor IF-2"/>
    <property type="match status" value="1"/>
</dbReference>
<dbReference type="FunFam" id="3.40.50.300:FF:000019">
    <property type="entry name" value="Translation initiation factor IF-2"/>
    <property type="match status" value="1"/>
</dbReference>
<dbReference type="Gene3D" id="3.40.50.300">
    <property type="entry name" value="P-loop containing nucleotide triphosphate hydrolases"/>
    <property type="match status" value="1"/>
</dbReference>
<dbReference type="Gene3D" id="3.30.56.50">
    <property type="entry name" value="Putative DNA-binding domain, N-terminal subdomain of bacterial translation initiation factor IF2"/>
    <property type="match status" value="1"/>
</dbReference>
<dbReference type="Gene3D" id="2.40.30.10">
    <property type="entry name" value="Translation factors"/>
    <property type="match status" value="2"/>
</dbReference>
<dbReference type="Gene3D" id="3.40.50.10050">
    <property type="entry name" value="Translation initiation factor IF- 2, domain 3"/>
    <property type="match status" value="1"/>
</dbReference>
<dbReference type="HAMAP" id="MF_00100_B">
    <property type="entry name" value="IF_2_B"/>
    <property type="match status" value="1"/>
</dbReference>
<dbReference type="InterPro" id="IPR009061">
    <property type="entry name" value="DNA-bd_dom_put_sf"/>
</dbReference>
<dbReference type="InterPro" id="IPR053905">
    <property type="entry name" value="EF-G-like_DII"/>
</dbReference>
<dbReference type="InterPro" id="IPR004161">
    <property type="entry name" value="EFTu-like_2"/>
</dbReference>
<dbReference type="InterPro" id="IPR013575">
    <property type="entry name" value="IF2_assoc_dom_bac"/>
</dbReference>
<dbReference type="InterPro" id="IPR044145">
    <property type="entry name" value="IF2_II"/>
</dbReference>
<dbReference type="InterPro" id="IPR006847">
    <property type="entry name" value="IF2_N"/>
</dbReference>
<dbReference type="InterPro" id="IPR027417">
    <property type="entry name" value="P-loop_NTPase"/>
</dbReference>
<dbReference type="InterPro" id="IPR005225">
    <property type="entry name" value="Small_GTP-bd"/>
</dbReference>
<dbReference type="InterPro" id="IPR000795">
    <property type="entry name" value="T_Tr_GTP-bd_dom"/>
</dbReference>
<dbReference type="InterPro" id="IPR000178">
    <property type="entry name" value="TF_IF2_bacterial-like"/>
</dbReference>
<dbReference type="InterPro" id="IPR015760">
    <property type="entry name" value="TIF_IF2"/>
</dbReference>
<dbReference type="InterPro" id="IPR023115">
    <property type="entry name" value="TIF_IF2_dom3"/>
</dbReference>
<dbReference type="InterPro" id="IPR036925">
    <property type="entry name" value="TIF_IF2_dom3_sf"/>
</dbReference>
<dbReference type="InterPro" id="IPR009000">
    <property type="entry name" value="Transl_B-barrel_sf"/>
</dbReference>
<dbReference type="NCBIfam" id="TIGR00487">
    <property type="entry name" value="IF-2"/>
    <property type="match status" value="1"/>
</dbReference>
<dbReference type="NCBIfam" id="TIGR00231">
    <property type="entry name" value="small_GTP"/>
    <property type="match status" value="1"/>
</dbReference>
<dbReference type="PANTHER" id="PTHR43381:SF5">
    <property type="entry name" value="TR-TYPE G DOMAIN-CONTAINING PROTEIN"/>
    <property type="match status" value="1"/>
</dbReference>
<dbReference type="PANTHER" id="PTHR43381">
    <property type="entry name" value="TRANSLATION INITIATION FACTOR IF-2-RELATED"/>
    <property type="match status" value="1"/>
</dbReference>
<dbReference type="Pfam" id="PF22042">
    <property type="entry name" value="EF-G_D2"/>
    <property type="match status" value="1"/>
</dbReference>
<dbReference type="Pfam" id="PF00009">
    <property type="entry name" value="GTP_EFTU"/>
    <property type="match status" value="1"/>
</dbReference>
<dbReference type="Pfam" id="PF03144">
    <property type="entry name" value="GTP_EFTU_D2"/>
    <property type="match status" value="1"/>
</dbReference>
<dbReference type="Pfam" id="PF11987">
    <property type="entry name" value="IF-2"/>
    <property type="match status" value="1"/>
</dbReference>
<dbReference type="Pfam" id="PF08364">
    <property type="entry name" value="IF2_assoc"/>
    <property type="match status" value="1"/>
</dbReference>
<dbReference type="Pfam" id="PF04760">
    <property type="entry name" value="IF2_N"/>
    <property type="match status" value="2"/>
</dbReference>
<dbReference type="SUPFAM" id="SSF52156">
    <property type="entry name" value="Initiation factor IF2/eIF5b, domain 3"/>
    <property type="match status" value="1"/>
</dbReference>
<dbReference type="SUPFAM" id="SSF52540">
    <property type="entry name" value="P-loop containing nucleoside triphosphate hydrolases"/>
    <property type="match status" value="1"/>
</dbReference>
<dbReference type="SUPFAM" id="SSF46955">
    <property type="entry name" value="Putative DNA-binding domain"/>
    <property type="match status" value="1"/>
</dbReference>
<dbReference type="SUPFAM" id="SSF50447">
    <property type="entry name" value="Translation proteins"/>
    <property type="match status" value="2"/>
</dbReference>
<dbReference type="PROSITE" id="PS51722">
    <property type="entry name" value="G_TR_2"/>
    <property type="match status" value="1"/>
</dbReference>
<dbReference type="PROSITE" id="PS01176">
    <property type="entry name" value="IF2"/>
    <property type="match status" value="1"/>
</dbReference>
<proteinExistence type="inferred from homology"/>
<sequence length="896" mass="96151">MADTTVDKLATEVGKSTERLVEQFSQAGIKKSASDTVSETEKQQLLDFLKKQHGGDAAPTKMTLQRKSVSTLSVAGSGGQSKDVKVEVRKKRTFVKRDEAAEAELAAAAKAEEAKAAEAEAKAKAEAEAKAKVDAEAKVKAKAEAEAKAKAKVQTEKPAAETAEDKAAKAEEAKLLAAQDAVAKAKANEEASAAADEARRLAEENEKRWAEEEKARKEAEKSVDHHVTTSTEARAAEDTADANAEKRGRRPRKPSANAGNNANANAGAGKPGGKGKRGKDNRRDNRNSRNSRNTRSVAPESMDHAFTKPAAVVKAEVSIGETVSVAELASKMSIKATEIIKQMMKMGSMVTINQVLDQETAQLVAEEMGHKVILTRENELEHQVLADRNGDVKVEPRAPVVTIMGHVDHGKTSLLDYIRRAKVASGEAGGITQHIGAYHVETENGMITFLDTPGHAAFTAMRARGAKATDIVILVVAADDGVMPQTIEAIQHAKAGGVPLIVAVNKIDKPEADPDRVKSELSQHGVMSEDWGGNNMFVHVSAKDGTGIDELLEGILLEAEVLELQAVREGMAAGVVVESKLDKGRGPVATVLVQEGTLKQGDIVLCGLEYGKVRAMRDENGKAITEAGPSIPVEILGLSGVPSAGDEATVVRDERKAREVALYRQGKFRDVKLARQQKSKLENMFANMVEGEVQELNLVLKADVQGSLEAIADSLNSLSTDEVKVNIIARGVGGLTETDATLAAASNAIMVGFNVRADAQARKVVDSESVDLRYYSIIYQLIDEVRDAMSGMLAPEFKQEIIGLAEVRDVFKSPKIGAIAGCMVTEGTIKRSAPIRVLRDNIVIYEGELESLRRFKDDVSDVRNGMECGIGVKNYNDVRVGDQIEVFETVEIARTL</sequence>
<evidence type="ECO:0000250" key="1"/>
<evidence type="ECO:0000255" key="2">
    <source>
        <dbReference type="HAMAP-Rule" id="MF_00100"/>
    </source>
</evidence>
<evidence type="ECO:0000256" key="3">
    <source>
        <dbReference type="SAM" id="MobiDB-lite"/>
    </source>
</evidence>
<comment type="function">
    <text evidence="2">One of the essential components for the initiation of protein synthesis. Protects formylmethionyl-tRNA from spontaneous hydrolysis and promotes its binding to the 30S ribosomal subunits. Also involved in the hydrolysis of GTP during the formation of the 70S ribosomal complex.</text>
</comment>
<comment type="subcellular location">
    <subcellularLocation>
        <location evidence="2">Cytoplasm</location>
    </subcellularLocation>
</comment>
<comment type="similarity">
    <text evidence="2">Belongs to the TRAFAC class translation factor GTPase superfamily. Classic translation factor GTPase family. IF-2 subfamily.</text>
</comment>
<gene>
    <name evidence="2" type="primary">infB</name>
    <name type="ordered locus">Spea_3060</name>
</gene>
<feature type="chain" id="PRO_1000075620" description="Translation initiation factor IF-2">
    <location>
        <begin position="1"/>
        <end position="896"/>
    </location>
</feature>
<feature type="domain" description="tr-type G">
    <location>
        <begin position="396"/>
        <end position="563"/>
    </location>
</feature>
<feature type="region of interest" description="Disordered" evidence="3">
    <location>
        <begin position="117"/>
        <end position="303"/>
    </location>
</feature>
<feature type="region of interest" description="G1" evidence="1">
    <location>
        <begin position="405"/>
        <end position="412"/>
    </location>
</feature>
<feature type="region of interest" description="G2" evidence="1">
    <location>
        <begin position="430"/>
        <end position="434"/>
    </location>
</feature>
<feature type="region of interest" description="G3" evidence="1">
    <location>
        <begin position="451"/>
        <end position="454"/>
    </location>
</feature>
<feature type="region of interest" description="G4" evidence="1">
    <location>
        <begin position="505"/>
        <end position="508"/>
    </location>
</feature>
<feature type="region of interest" description="G5" evidence="1">
    <location>
        <begin position="541"/>
        <end position="543"/>
    </location>
</feature>
<feature type="compositionally biased region" description="Basic and acidic residues" evidence="3">
    <location>
        <begin position="117"/>
        <end position="174"/>
    </location>
</feature>
<feature type="compositionally biased region" description="Low complexity" evidence="3">
    <location>
        <begin position="175"/>
        <end position="195"/>
    </location>
</feature>
<feature type="compositionally biased region" description="Basic and acidic residues" evidence="3">
    <location>
        <begin position="196"/>
        <end position="227"/>
    </location>
</feature>
<feature type="compositionally biased region" description="Low complexity" evidence="3">
    <location>
        <begin position="254"/>
        <end position="268"/>
    </location>
</feature>
<feature type="binding site" evidence="2">
    <location>
        <begin position="405"/>
        <end position="412"/>
    </location>
    <ligand>
        <name>GTP</name>
        <dbReference type="ChEBI" id="CHEBI:37565"/>
    </ligand>
</feature>
<feature type="binding site" evidence="2">
    <location>
        <begin position="451"/>
        <end position="455"/>
    </location>
    <ligand>
        <name>GTP</name>
        <dbReference type="ChEBI" id="CHEBI:37565"/>
    </ligand>
</feature>
<feature type="binding site" evidence="2">
    <location>
        <begin position="505"/>
        <end position="508"/>
    </location>
    <ligand>
        <name>GTP</name>
        <dbReference type="ChEBI" id="CHEBI:37565"/>
    </ligand>
</feature>
<organism>
    <name type="scientific">Shewanella pealeana (strain ATCC 700345 / ANG-SQ1)</name>
    <dbReference type="NCBI Taxonomy" id="398579"/>
    <lineage>
        <taxon>Bacteria</taxon>
        <taxon>Pseudomonadati</taxon>
        <taxon>Pseudomonadota</taxon>
        <taxon>Gammaproteobacteria</taxon>
        <taxon>Alteromonadales</taxon>
        <taxon>Shewanellaceae</taxon>
        <taxon>Shewanella</taxon>
    </lineage>
</organism>
<keyword id="KW-0963">Cytoplasm</keyword>
<keyword id="KW-0342">GTP-binding</keyword>
<keyword id="KW-0396">Initiation factor</keyword>
<keyword id="KW-0547">Nucleotide-binding</keyword>
<keyword id="KW-0648">Protein biosynthesis</keyword>
<keyword id="KW-1185">Reference proteome</keyword>
<protein>
    <recommendedName>
        <fullName evidence="2">Translation initiation factor IF-2</fullName>
    </recommendedName>
</protein>
<accession>A8H740</accession>
<reference key="1">
    <citation type="submission" date="2007-10" db="EMBL/GenBank/DDBJ databases">
        <title>Complete sequence of Shewanella pealeana ATCC 700345.</title>
        <authorList>
            <consortium name="US DOE Joint Genome Institute"/>
            <person name="Copeland A."/>
            <person name="Lucas S."/>
            <person name="Lapidus A."/>
            <person name="Barry K."/>
            <person name="Glavina del Rio T."/>
            <person name="Dalin E."/>
            <person name="Tice H."/>
            <person name="Pitluck S."/>
            <person name="Chertkov O."/>
            <person name="Brettin T."/>
            <person name="Bruce D."/>
            <person name="Detter J.C."/>
            <person name="Han C."/>
            <person name="Schmutz J."/>
            <person name="Larimer F."/>
            <person name="Land M."/>
            <person name="Hauser L."/>
            <person name="Kyrpides N."/>
            <person name="Kim E."/>
            <person name="Zhao J.-S.Z."/>
            <person name="Manno D."/>
            <person name="Hawari J."/>
            <person name="Richardson P."/>
        </authorList>
    </citation>
    <scope>NUCLEOTIDE SEQUENCE [LARGE SCALE GENOMIC DNA]</scope>
    <source>
        <strain>ATCC 700345 / ANG-SQ1</strain>
    </source>
</reference>